<proteinExistence type="inferred from homology"/>
<protein>
    <recommendedName>
        <fullName evidence="6">Palmitoyl-CoA ligase FUM16</fullName>
        <ecNumber evidence="8">6.2.1.-</ecNumber>
    </recommendedName>
    <alternativeName>
        <fullName evidence="5">Fumonisin biosynthesis cluster protein 16</fullName>
    </alternativeName>
    <alternativeName>
        <fullName evidence="7">Long-chain-fatty-acid--CoA ligase FUM16</fullName>
    </alternativeName>
</protein>
<comment type="function">
    <text evidence="2 3 4 9">Palmitoyl-CoA ligase; part of the gene cluster that mediates the biosynthesis of fumonisins B1 (FB1), B2 (FB2), B3 (FB3), and B4 (FB4), which are carcinogenic mycotoxins (PubMed:12620260, PubMed:17147424, PubMed:39704544). Plays a role in the synthesis of ceramide and is involved in self-protection from fumonisin B1 toxicity (PubMed:17147424, PubMed:39704544). The biosynthesis starts with the FUM1-catalyzed carbon chain assembly from one molecule of acetyl-CoA, eight molecules of malonyl-CoA, and two molecules of methionine (in S-adenosyl form). The C18 polyketide chain is released from the enzyme by a nucleophilic attack of a carbanion, which is derived from R-carbon of alanine by decarboxylation, on the carbonyl carbon of polyketide acyl chain. This step is catalyzed by the pyridoxal 5'-phosphate-dependent aminoacyl transferase FUM8. The resultant 3-keto intermediate is then stereospecifically reduced to a 3-hydroxyl product by reductase FUM13. Subsequent oxidations at C-10 by the cytochrome P450 monooxygenase FUM2, C-14 and C-15 by FUM6, FUM12 or FUM15, tricarballylic esterification of the hydroxyl groups on C-14 and C-15 by acyltransferase FUM14, and C-5 hydroxylation by 2-keto-glutarate-dependent dioxygenase FUM3 furnish the biosynthesis of fumonisins. The tricarballylic moieties are most likely derived from the citric acid cycle, and their addition to the carbon backbone may involve FUM7, FUM10, FUM11 and FUM14 (Probable).</text>
</comment>
<comment type="pathway">
    <text evidence="2">Mycotoxin biosynthesis.</text>
</comment>
<comment type="subcellular location">
    <subcellularLocation>
        <location evidence="4">Endoplasmic reticulum</location>
    </subcellularLocation>
</comment>
<comment type="disruption phenotype">
    <text evidence="3 4">Does not affect fumonisin production (PubMed:17147424, PubMed:39704544). Increases the production of ceramide intermediates including 3-ketosphinganine, sphinganine and phytosphingosine in comparison to the control (PubMed:39704544). Causes growth inhibition in both solid and liquid media (PubMed:39704544).</text>
</comment>
<comment type="similarity">
    <text evidence="7">Belongs to the ATP-dependent AMP-binding enzyme family.</text>
</comment>
<feature type="chain" id="PRO_0000441149" description="Palmitoyl-CoA ligase FUM16">
    <location>
        <begin position="1"/>
        <end position="676"/>
    </location>
</feature>
<feature type="region of interest" description="AMP-binding" evidence="1">
    <location>
        <begin position="552"/>
        <end position="655"/>
    </location>
</feature>
<feature type="binding site" evidence="1">
    <location>
        <begin position="245"/>
        <end position="256"/>
    </location>
    <ligand>
        <name>AMP</name>
        <dbReference type="ChEBI" id="CHEBI:456215"/>
    </ligand>
</feature>
<keyword id="KW-0067">ATP-binding</keyword>
<keyword id="KW-0256">Endoplasmic reticulum</keyword>
<keyword id="KW-0436">Ligase</keyword>
<keyword id="KW-0547">Nucleotide-binding</keyword>
<keyword id="KW-1185">Reference proteome</keyword>
<evidence type="ECO:0000255" key="1"/>
<evidence type="ECO:0000269" key="2">
    <source>
    </source>
</evidence>
<evidence type="ECO:0000269" key="3">
    <source>
    </source>
</evidence>
<evidence type="ECO:0000269" key="4">
    <source>
    </source>
</evidence>
<evidence type="ECO:0000303" key="5">
    <source>
    </source>
</evidence>
<evidence type="ECO:0000303" key="6">
    <source>
    </source>
</evidence>
<evidence type="ECO:0000305" key="7"/>
<evidence type="ECO:0000305" key="8">
    <source>
    </source>
</evidence>
<evidence type="ECO:0000305" key="9">
    <source>
    </source>
</evidence>
<dbReference type="EC" id="6.2.1.-" evidence="8"/>
<dbReference type="EMBL" id="AF155773">
    <property type="protein sequence ID" value="AAN74819.2"/>
    <property type="molecule type" value="Genomic_DNA"/>
</dbReference>
<dbReference type="EMBL" id="CM000578">
    <property type="protein sequence ID" value="EWG36208.1"/>
    <property type="molecule type" value="Genomic_DNA"/>
</dbReference>
<dbReference type="RefSeq" id="XP_018742399.1">
    <property type="nucleotide sequence ID" value="XM_018886763.1"/>
</dbReference>
<dbReference type="SMR" id="W7L9F0"/>
<dbReference type="STRING" id="334819.W7L9F0"/>
<dbReference type="GeneID" id="30058703"/>
<dbReference type="KEGG" id="fvr:FVEG_00326"/>
<dbReference type="VEuPathDB" id="FungiDB:FVEG_00326"/>
<dbReference type="eggNOG" id="KOG1180">
    <property type="taxonomic scope" value="Eukaryota"/>
</dbReference>
<dbReference type="OrthoDB" id="58290at110618"/>
<dbReference type="Proteomes" id="UP000009096">
    <property type="component" value="Chromosome 1"/>
</dbReference>
<dbReference type="GO" id="GO:0005783">
    <property type="term" value="C:endoplasmic reticulum"/>
    <property type="evidence" value="ECO:0007669"/>
    <property type="project" value="TreeGrafter"/>
</dbReference>
<dbReference type="GO" id="GO:0005811">
    <property type="term" value="C:lipid droplet"/>
    <property type="evidence" value="ECO:0007669"/>
    <property type="project" value="TreeGrafter"/>
</dbReference>
<dbReference type="GO" id="GO:0005886">
    <property type="term" value="C:plasma membrane"/>
    <property type="evidence" value="ECO:0007669"/>
    <property type="project" value="TreeGrafter"/>
</dbReference>
<dbReference type="GO" id="GO:0005524">
    <property type="term" value="F:ATP binding"/>
    <property type="evidence" value="ECO:0007669"/>
    <property type="project" value="UniProtKB-KW"/>
</dbReference>
<dbReference type="GO" id="GO:0004467">
    <property type="term" value="F:long-chain fatty acid-CoA ligase activity"/>
    <property type="evidence" value="ECO:0007669"/>
    <property type="project" value="TreeGrafter"/>
</dbReference>
<dbReference type="GO" id="GO:0035336">
    <property type="term" value="P:long-chain fatty-acyl-CoA metabolic process"/>
    <property type="evidence" value="ECO:0007669"/>
    <property type="project" value="TreeGrafter"/>
</dbReference>
<dbReference type="CDD" id="cd17639">
    <property type="entry name" value="LC_FACS_euk1"/>
    <property type="match status" value="1"/>
</dbReference>
<dbReference type="Gene3D" id="3.40.50.12780">
    <property type="entry name" value="N-terminal domain of ligase-like"/>
    <property type="match status" value="1"/>
</dbReference>
<dbReference type="InterPro" id="IPR000873">
    <property type="entry name" value="AMP-dep_synth/lig_dom"/>
</dbReference>
<dbReference type="InterPro" id="IPR042099">
    <property type="entry name" value="ANL_N_sf"/>
</dbReference>
<dbReference type="PANTHER" id="PTHR43272:SF83">
    <property type="entry name" value="ACYL-COA SYNTHETASE LONG-CHAIN, ISOFORM J"/>
    <property type="match status" value="1"/>
</dbReference>
<dbReference type="PANTHER" id="PTHR43272">
    <property type="entry name" value="LONG-CHAIN-FATTY-ACID--COA LIGASE"/>
    <property type="match status" value="1"/>
</dbReference>
<dbReference type="Pfam" id="PF00501">
    <property type="entry name" value="AMP-binding"/>
    <property type="match status" value="1"/>
</dbReference>
<dbReference type="SUPFAM" id="SSF56801">
    <property type="entry name" value="Acetyl-CoA synthetase-like"/>
    <property type="match status" value="1"/>
</dbReference>
<name>FUM16_GIBM7</name>
<accession>W7L9F0</accession>
<accession>Q8J2Q4</accession>
<organism>
    <name type="scientific">Gibberella moniliformis (strain M3125 / FGSC 7600)</name>
    <name type="common">Maize ear and stalk rot fungus</name>
    <name type="synonym">Fusarium verticillioides</name>
    <dbReference type="NCBI Taxonomy" id="334819"/>
    <lineage>
        <taxon>Eukaryota</taxon>
        <taxon>Fungi</taxon>
        <taxon>Dikarya</taxon>
        <taxon>Ascomycota</taxon>
        <taxon>Pezizomycotina</taxon>
        <taxon>Sordariomycetes</taxon>
        <taxon>Hypocreomycetidae</taxon>
        <taxon>Hypocreales</taxon>
        <taxon>Nectriaceae</taxon>
        <taxon>Fusarium</taxon>
        <taxon>Fusarium fujikuroi species complex</taxon>
    </lineage>
</organism>
<gene>
    <name evidence="5" type="primary">FUM16</name>
    <name type="ORF">FVEG_00326</name>
</gene>
<reference key="1">
    <citation type="journal article" date="2003" name="Fungal Genet. Biol.">
        <title>Co-expression of 15 contiguous genes delineates a fumonisin biosynthetic gene cluster in Gibberella moniliformis.</title>
        <authorList>
            <person name="Proctor R.H."/>
            <person name="Brown D.W."/>
            <person name="Plattner R.D."/>
            <person name="Desjardins A.E."/>
        </authorList>
    </citation>
    <scope>NUCLEOTIDE SEQUENCE [GENOMIC DNA]</scope>
    <scope>PATHWAY</scope>
    <source>
        <strain>M3125 / FGSC 7600</strain>
    </source>
</reference>
<reference key="2">
    <citation type="journal article" date="2010" name="Nature">
        <title>Comparative genomics reveals mobile pathogenicity chromosomes in Fusarium.</title>
        <authorList>
            <person name="Ma L.-J."/>
            <person name="van der Does H.C."/>
            <person name="Borkovich K.A."/>
            <person name="Coleman J.J."/>
            <person name="Daboussi M.-J."/>
            <person name="Di Pietro A."/>
            <person name="Dufresne M."/>
            <person name="Freitag M."/>
            <person name="Grabherr M."/>
            <person name="Henrissat B."/>
            <person name="Houterman P.M."/>
            <person name="Kang S."/>
            <person name="Shim W.-B."/>
            <person name="Woloshuk C."/>
            <person name="Xie X."/>
            <person name="Xu J.-R."/>
            <person name="Antoniw J."/>
            <person name="Baker S.E."/>
            <person name="Bluhm B.H."/>
            <person name="Breakspear A."/>
            <person name="Brown D.W."/>
            <person name="Butchko R.A.E."/>
            <person name="Chapman S."/>
            <person name="Coulson R."/>
            <person name="Coutinho P.M."/>
            <person name="Danchin E.G.J."/>
            <person name="Diener A."/>
            <person name="Gale L.R."/>
            <person name="Gardiner D.M."/>
            <person name="Goff S."/>
            <person name="Hammond-Kosack K.E."/>
            <person name="Hilburn K."/>
            <person name="Hua-Van A."/>
            <person name="Jonkers W."/>
            <person name="Kazan K."/>
            <person name="Kodira C.D."/>
            <person name="Koehrsen M."/>
            <person name="Kumar L."/>
            <person name="Lee Y.-H."/>
            <person name="Li L."/>
            <person name="Manners J.M."/>
            <person name="Miranda-Saavedra D."/>
            <person name="Mukherjee M."/>
            <person name="Park G."/>
            <person name="Park J."/>
            <person name="Park S.-Y."/>
            <person name="Proctor R.H."/>
            <person name="Regev A."/>
            <person name="Ruiz-Roldan M.C."/>
            <person name="Sain D."/>
            <person name="Sakthikumar S."/>
            <person name="Sykes S."/>
            <person name="Schwartz D.C."/>
            <person name="Turgeon B.G."/>
            <person name="Wapinski I."/>
            <person name="Yoder O."/>
            <person name="Young S."/>
            <person name="Zeng Q."/>
            <person name="Zhou S."/>
            <person name="Galagan J."/>
            <person name="Cuomo C.A."/>
            <person name="Kistler H.C."/>
            <person name="Rep M."/>
        </authorList>
    </citation>
    <scope>NUCLEOTIDE SEQUENCE [LARGE SCALE GENOMIC DNA]</scope>
    <source>
        <strain>M3125 / FGSC 7600</strain>
    </source>
</reference>
<reference key="3">
    <citation type="journal article" date="2006" name="J. Agric. Food Chem.">
        <title>Deletion analysis of FUM genes involved in tricarballylic ester formation during fumonisin biosynthesis.</title>
        <authorList>
            <person name="Butchko R.A."/>
            <person name="Plattner R.D."/>
            <person name="Proctor R.H."/>
        </authorList>
    </citation>
    <scope>FUNCTION</scope>
    <scope>DISRUPTION PHENOTYPE</scope>
</reference>
<reference evidence="7" key="4">
    <citation type="journal article" date="2024" name="MBio">
        <title>The palmitoyl-CoA ligase Fum16 is part of a Fusarium verticillioides fumonisin subcluster involved in self-protection.</title>
        <authorList>
            <person name="Gherlone F."/>
            <person name="Jojic K."/>
            <person name="Huang Y."/>
            <person name="Hoefgen S."/>
            <person name="Valiante V."/>
            <person name="Janevska S."/>
        </authorList>
    </citation>
    <scope>FUNCTION</scope>
    <scope>SUBCELLULAR LOCATION</scope>
    <scope>DISRUPTION PHENOTYPE</scope>
</reference>
<sequence>MYHTVPYTIESPGYLKVAGESLPRRHPRAKHGLLRYPSAGVLTVFDIVRRSAKLYPDNKAVGSRRLIKMHREFKIIQDKEKEWIYYELGPYNYLSYSQYELLAIQIGSGLRKLGLSSSNKVYLFGTTSANWISMSHGCASQGIPIVTGYDTLSATDIQHSLSQTHAEVIYLDPHLLGTASIALENSQVKTVIINTGSIFSGGYDIDQFRNEHPQFNVITYEELIQLGRHNLKEPIPVKSSDLFCIMYTSGSTGLPNGCCITHENFLAGITGLLGGIDDFVSDQERVLAYLPLAHIFEMALENLVMYIGGTLGYGNPKTLTDASLRECNGDMVEFKPTIMVGVPQIWETIRKAVLSKLNCSGFVAKTVFWTAMSFKSFAVRYSLPGKGVFDDLVFGRVRQMTGGRLRYILNGSSGIADSTKEFLSLIVAEMLTGYGLTETCANGALSSPFEQTTSAIGSTSPAIDVKLVSIPELGYFTDADAGPCQGEILVRGPAVFKGYFNNPQGTEKAFAPGGWFKTGDIGEFDDRGHLKIIDRIKSLVKMQGGEYIALEKLESIYRTSQAILQVMVHADFEYTRPIVIIMPNTKFLQDKSRELGFSDDDSTLSSERMSAYVLDDLQDIARRSGLSKIETVTGVVITDIEWTPQSGLVTPTMKLNRRFILNYFRDEVEKCMQSIG</sequence>